<keyword id="KW-1015">Disulfide bond</keyword>
<keyword id="KW-0528">Neurotoxin</keyword>
<keyword id="KW-0732">Signal</keyword>
<keyword id="KW-0800">Toxin</keyword>
<name>NV4_NEMVE</name>
<reference evidence="7" key="1">
    <citation type="journal article" date="2019" name="Mol. Biol. Evol.">
        <title>The birth and death of toxins with distinct functions: a case study in the sea anemone Nematostella.</title>
        <authorList>
            <person name="Sachkova M.Y."/>
            <person name="Singer S.A."/>
            <person name="Macrander J."/>
            <person name="Reitzel A.M."/>
            <person name="Peigneur S."/>
            <person name="Tytgat J."/>
            <person name="Moran Y."/>
        </authorList>
    </citation>
    <scope>NUCLEOTIDE SEQUENCE [MRNA]</scope>
    <scope>FUNCTION</scope>
    <scope>IDENTIFICATION BY MASS SPECTROMETRY</scope>
    <scope>DEVELOPMENTAL STAGE</scope>
    <scope>TISSUE SPECIFICITY</scope>
    <scope>RECOMBINANT EXPRESSION</scope>
</reference>
<proteinExistence type="evidence at protein level"/>
<protein>
    <recommendedName>
        <fullName evidence="5">N.vectensis toxin 4</fullName>
        <shortName evidence="4">Nv4</shortName>
    </recommendedName>
</protein>
<organism>
    <name type="scientific">Nematostella vectensis</name>
    <name type="common">Starlet sea anemone</name>
    <dbReference type="NCBI Taxonomy" id="45351"/>
    <lineage>
        <taxon>Eukaryota</taxon>
        <taxon>Metazoa</taxon>
        <taxon>Cnidaria</taxon>
        <taxon>Anthozoa</taxon>
        <taxon>Hexacorallia</taxon>
        <taxon>Actiniaria</taxon>
        <taxon>Edwardsiidae</taxon>
        <taxon>Nematostella</taxon>
    </lineage>
</organism>
<feature type="signal peptide" evidence="2">
    <location>
        <begin position="1"/>
        <end position="20"/>
    </location>
</feature>
<feature type="chain" id="PRO_5023842426" description="N.vectensis toxin 4" evidence="6">
    <location>
        <begin position="21"/>
        <end position="81"/>
    </location>
</feature>
<feature type="disulfide bond" evidence="1">
    <location>
        <begin position="46"/>
        <end position="75"/>
    </location>
</feature>
<feature type="disulfide bond" evidence="1">
    <location>
        <begin position="48"/>
        <end position="70"/>
    </location>
</feature>
<feature type="disulfide bond" evidence="1">
    <location>
        <begin position="63"/>
        <end position="76"/>
    </location>
</feature>
<dbReference type="EMBL" id="MK608361">
    <property type="protein sequence ID" value="QEV81587.1"/>
    <property type="molecule type" value="mRNA"/>
</dbReference>
<dbReference type="SMR" id="A0A5J6K6K4"/>
<dbReference type="GO" id="GO:0090729">
    <property type="term" value="F:toxin activity"/>
    <property type="evidence" value="ECO:0007669"/>
    <property type="project" value="UniProtKB-KW"/>
</dbReference>
<sequence length="81" mass="9219">MRSSWMFVICFAMLILYTNGRILRPETSWEDELEDDLANNKRSLACSCEDGSGRTGTHWIFDCPKGWADCGGFRCCVETSK</sequence>
<evidence type="ECO:0000250" key="1">
    <source>
        <dbReference type="UniProtKB" id="P19651"/>
    </source>
</evidence>
<evidence type="ECO:0000255" key="2"/>
<evidence type="ECO:0000269" key="3">
    <source>
    </source>
</evidence>
<evidence type="ECO:0000303" key="4">
    <source>
    </source>
</evidence>
<evidence type="ECO:0000305" key="5"/>
<evidence type="ECO:0000305" key="6">
    <source>
    </source>
</evidence>
<evidence type="ECO:0000312" key="7">
    <source>
        <dbReference type="EMBL" id="QEV81587.1"/>
    </source>
</evidence>
<accession>A0A5J6K6K4</accession>
<comment type="function">
    <text evidence="3">Has toxic effects on zebrafish larvae (PubMed:31134275). It causes contractile paralysis and twitching of the tail within 30 minutes, followed by death within 40 minutes (PubMed:31134275). Does not show any toxicity when injected into arthropods (cherry shrimps or grass shrimps) (PubMed:31134275).</text>
</comment>
<comment type="tissue specificity">
    <text evidence="3">Expressed in ectodermal gland cells (PubMed:31134275). In adult female tissues, highly transcribed in mesenteries (gametes-producing tissue) and slightly transcribed in tentacles, pharynx and physa (PubMed:31134275).</text>
</comment>
<comment type="developmental stage">
    <text evidence="3">Is detected in unfertilized eggs, late planulae, and primary polyps, but not in adults (both males and females) (at protein level). At mRNA level, is found at multiple developmental stages including unfertilized eggs, blastulae, gastrulae, early planulae, planulae, metamorphosing planulae, primary polyps, juvenile polyps (low levels at 4 months old, but no mRNA at 2 months), adult males, and adult females, with the highest levels from gastrulae to primary polyps, and adult females.</text>
</comment>
<comment type="miscellaneous">
    <text evidence="3">Negative results: does not show activity on all ion channel tested at 10 uM (hNav1.1/SCN1A, rNav1.2/SCN2A, rNav1.3/SCN3A, rNav1.4/SCN4A, hNav1.5/SCN5A, mNav1.6/SCN8A, rNav1.8/SCN10A, BgNav1, Shaker IR, rKv1.1/KCNA1, rKv1.2/KCNA2, hKv1.3/KCNA3, rKv1.4/KCNA4, rKv1.5/KCNA5, rKv1.6/KCNA6, rKv2.1/KCNB1, hKv3.1/KCNC1, rKv4.3/KCND3, hKv7.2/KCNQ2, hKv7.3/KCNQ3, hKv10.1/KCNH1/EAG1, hKv11.1/KCNH2/ERG1).</text>
</comment>